<dbReference type="EMBL" id="CU329670">
    <property type="protein sequence ID" value="CAD27505.1"/>
    <property type="molecule type" value="Genomic_DNA"/>
</dbReference>
<dbReference type="SMR" id="Q8TFH2"/>
<dbReference type="FunCoup" id="Q8TFH2">
    <property type="interactions" value="36"/>
</dbReference>
<dbReference type="STRING" id="284812.Q8TFH2"/>
<dbReference type="PaxDb" id="4896-SPAPB17E12.12c.1"/>
<dbReference type="EnsemblFungi" id="SPAPB17E12.12c.1">
    <property type="protein sequence ID" value="SPAPB17E12.12c.1:pep"/>
    <property type="gene ID" value="SPAPB17E12.12c"/>
</dbReference>
<dbReference type="KEGG" id="spo:3361393"/>
<dbReference type="PomBase" id="SPAPB17E12.12c"/>
<dbReference type="VEuPathDB" id="FungiDB:SPAPB17E12.12c"/>
<dbReference type="eggNOG" id="KOG0752">
    <property type="taxonomic scope" value="Eukaryota"/>
</dbReference>
<dbReference type="HOGENOM" id="CLU_015166_10_9_1"/>
<dbReference type="InParanoid" id="Q8TFH2"/>
<dbReference type="OMA" id="YKMSVPK"/>
<dbReference type="PhylomeDB" id="Q8TFH2"/>
<dbReference type="PRO" id="PR:Q8TFH2"/>
<dbReference type="Proteomes" id="UP000002485">
    <property type="component" value="Chromosome I"/>
</dbReference>
<dbReference type="GO" id="GO:0005743">
    <property type="term" value="C:mitochondrial inner membrane"/>
    <property type="evidence" value="ECO:0000250"/>
    <property type="project" value="PomBase"/>
</dbReference>
<dbReference type="GO" id="GO:0005739">
    <property type="term" value="C:mitochondrion"/>
    <property type="evidence" value="ECO:0007005"/>
    <property type="project" value="PomBase"/>
</dbReference>
<dbReference type="GO" id="GO:0046964">
    <property type="term" value="F:3'-phosphoadenosine 5'-phosphosulfate transmembrane transporter activity"/>
    <property type="evidence" value="ECO:0000266"/>
    <property type="project" value="PomBase"/>
</dbReference>
<dbReference type="GO" id="GO:1902557">
    <property type="term" value="F:5'-adenylyl sulfate transmembrane transporter activity"/>
    <property type="evidence" value="ECO:0000266"/>
    <property type="project" value="PomBase"/>
</dbReference>
<dbReference type="GO" id="GO:0015215">
    <property type="term" value="F:nucleotide transmembrane transporter activity"/>
    <property type="evidence" value="ECO:0000318"/>
    <property type="project" value="GO_Central"/>
</dbReference>
<dbReference type="GO" id="GO:0051503">
    <property type="term" value="P:adenine nucleotide transport"/>
    <property type="evidence" value="ECO:0000318"/>
    <property type="project" value="GO_Central"/>
</dbReference>
<dbReference type="GO" id="GO:1990554">
    <property type="term" value="P:mitochondrial 3'-phospho-5'-adenylyl sulfate transmembrane transport"/>
    <property type="evidence" value="ECO:0000266"/>
    <property type="project" value="PomBase"/>
</dbReference>
<dbReference type="GO" id="GO:1990553">
    <property type="term" value="P:mitochondrial 5'-adenylyl sulfate transmembrane transport"/>
    <property type="evidence" value="ECO:0000266"/>
    <property type="project" value="PomBase"/>
</dbReference>
<dbReference type="FunFam" id="1.50.40.10:FF:000150">
    <property type="entry name" value="Adenine nucleotide transporter BT1, chloroplastic/mitochondrial"/>
    <property type="match status" value="1"/>
</dbReference>
<dbReference type="Gene3D" id="1.50.40.10">
    <property type="entry name" value="Mitochondrial carrier domain"/>
    <property type="match status" value="1"/>
</dbReference>
<dbReference type="InterPro" id="IPR002067">
    <property type="entry name" value="Mit_carrier"/>
</dbReference>
<dbReference type="InterPro" id="IPR018108">
    <property type="entry name" value="Mitochondrial_sb/sol_carrier"/>
</dbReference>
<dbReference type="InterPro" id="IPR023395">
    <property type="entry name" value="Mt_carrier_dom_sf"/>
</dbReference>
<dbReference type="PANTHER" id="PTHR24089">
    <property type="entry name" value="SOLUTE CARRIER FAMILY 25"/>
    <property type="match status" value="1"/>
</dbReference>
<dbReference type="Pfam" id="PF00153">
    <property type="entry name" value="Mito_carr"/>
    <property type="match status" value="3"/>
</dbReference>
<dbReference type="PRINTS" id="PR00926">
    <property type="entry name" value="MITOCARRIER"/>
</dbReference>
<dbReference type="SUPFAM" id="SSF103506">
    <property type="entry name" value="Mitochondrial carrier"/>
    <property type="match status" value="1"/>
</dbReference>
<dbReference type="PROSITE" id="PS50920">
    <property type="entry name" value="SOLCAR"/>
    <property type="match status" value="3"/>
</dbReference>
<comment type="subcellular location">
    <subcellularLocation>
        <location evidence="2">Mitochondrion inner membrane</location>
        <topology evidence="2">Multi-pass membrane protein</topology>
    </subcellularLocation>
</comment>
<comment type="similarity">
    <text evidence="3">Belongs to the mitochondrial carrier (TC 2.A.29) family.</text>
</comment>
<evidence type="ECO:0000255" key="1"/>
<evidence type="ECO:0000269" key="2">
    <source>
    </source>
</evidence>
<evidence type="ECO:0000305" key="3"/>
<name>YIKC_SCHPO</name>
<gene>
    <name type="ORF">SPAPB17E12.12c</name>
</gene>
<keyword id="KW-0472">Membrane</keyword>
<keyword id="KW-0496">Mitochondrion</keyword>
<keyword id="KW-0999">Mitochondrion inner membrane</keyword>
<keyword id="KW-1185">Reference proteome</keyword>
<keyword id="KW-0677">Repeat</keyword>
<keyword id="KW-0812">Transmembrane</keyword>
<keyword id="KW-1133">Transmembrane helix</keyword>
<keyword id="KW-0813">Transport</keyword>
<protein>
    <recommendedName>
        <fullName>Uncharacterized mitochondrial carrier PB17E12.12c</fullName>
    </recommendedName>
</protein>
<sequence>MQKDKFGPCAPSRIPLLSNDLISMLSGGVAATVSRTAVSPLERMKIIFQVQNNKEYTSLTSTLVKIWNREGLIGFFRGNGTNCLRAFPYGAVQFATFNMLKQRALKNRSHQNLENHERLLFGAIAGAASCATTYPLDIARTRLSIETAGLTSRSLAINNVANNSLKVKPLTLWSTLLYIVQHEGGYPALYNGLPATLLNVVPYVSICFFTFEFCKQKFFSNADLTAFQKLFLGGFTGIIGQTLTFPADVLRRRFQVNRIPGIGHNYKNIKSAIFHIYKTEGINGFFRGYSSNMLKIIPVMSITWYTYETVSKMLHDL</sequence>
<proteinExistence type="inferred from homology"/>
<reference key="1">
    <citation type="journal article" date="2002" name="Nature">
        <title>The genome sequence of Schizosaccharomyces pombe.</title>
        <authorList>
            <person name="Wood V."/>
            <person name="Gwilliam R."/>
            <person name="Rajandream M.A."/>
            <person name="Lyne M.H."/>
            <person name="Lyne R."/>
            <person name="Stewart A."/>
            <person name="Sgouros J.G."/>
            <person name="Peat N."/>
            <person name="Hayles J."/>
            <person name="Baker S.G."/>
            <person name="Basham D."/>
            <person name="Bowman S."/>
            <person name="Brooks K."/>
            <person name="Brown D."/>
            <person name="Brown S."/>
            <person name="Chillingworth T."/>
            <person name="Churcher C.M."/>
            <person name="Collins M."/>
            <person name="Connor R."/>
            <person name="Cronin A."/>
            <person name="Davis P."/>
            <person name="Feltwell T."/>
            <person name="Fraser A."/>
            <person name="Gentles S."/>
            <person name="Goble A."/>
            <person name="Hamlin N."/>
            <person name="Harris D.E."/>
            <person name="Hidalgo J."/>
            <person name="Hodgson G."/>
            <person name="Holroyd S."/>
            <person name="Hornsby T."/>
            <person name="Howarth S."/>
            <person name="Huckle E.J."/>
            <person name="Hunt S."/>
            <person name="Jagels K."/>
            <person name="James K.D."/>
            <person name="Jones L."/>
            <person name="Jones M."/>
            <person name="Leather S."/>
            <person name="McDonald S."/>
            <person name="McLean J."/>
            <person name="Mooney P."/>
            <person name="Moule S."/>
            <person name="Mungall K.L."/>
            <person name="Murphy L.D."/>
            <person name="Niblett D."/>
            <person name="Odell C."/>
            <person name="Oliver K."/>
            <person name="O'Neil S."/>
            <person name="Pearson D."/>
            <person name="Quail M.A."/>
            <person name="Rabbinowitsch E."/>
            <person name="Rutherford K.M."/>
            <person name="Rutter S."/>
            <person name="Saunders D."/>
            <person name="Seeger K."/>
            <person name="Sharp S."/>
            <person name="Skelton J."/>
            <person name="Simmonds M.N."/>
            <person name="Squares R."/>
            <person name="Squares S."/>
            <person name="Stevens K."/>
            <person name="Taylor K."/>
            <person name="Taylor R.G."/>
            <person name="Tivey A."/>
            <person name="Walsh S.V."/>
            <person name="Warren T."/>
            <person name="Whitehead S."/>
            <person name="Woodward J.R."/>
            <person name="Volckaert G."/>
            <person name="Aert R."/>
            <person name="Robben J."/>
            <person name="Grymonprez B."/>
            <person name="Weltjens I."/>
            <person name="Vanstreels E."/>
            <person name="Rieger M."/>
            <person name="Schaefer M."/>
            <person name="Mueller-Auer S."/>
            <person name="Gabel C."/>
            <person name="Fuchs M."/>
            <person name="Duesterhoeft A."/>
            <person name="Fritzc C."/>
            <person name="Holzer E."/>
            <person name="Moestl D."/>
            <person name="Hilbert H."/>
            <person name="Borzym K."/>
            <person name="Langer I."/>
            <person name="Beck A."/>
            <person name="Lehrach H."/>
            <person name="Reinhardt R."/>
            <person name="Pohl T.M."/>
            <person name="Eger P."/>
            <person name="Zimmermann W."/>
            <person name="Wedler H."/>
            <person name="Wambutt R."/>
            <person name="Purnelle B."/>
            <person name="Goffeau A."/>
            <person name="Cadieu E."/>
            <person name="Dreano S."/>
            <person name="Gloux S."/>
            <person name="Lelaure V."/>
            <person name="Mottier S."/>
            <person name="Galibert F."/>
            <person name="Aves S.J."/>
            <person name="Xiang Z."/>
            <person name="Hunt C."/>
            <person name="Moore K."/>
            <person name="Hurst S.M."/>
            <person name="Lucas M."/>
            <person name="Rochet M."/>
            <person name="Gaillardin C."/>
            <person name="Tallada V.A."/>
            <person name="Garzon A."/>
            <person name="Thode G."/>
            <person name="Daga R.R."/>
            <person name="Cruzado L."/>
            <person name="Jimenez J."/>
            <person name="Sanchez M."/>
            <person name="del Rey F."/>
            <person name="Benito J."/>
            <person name="Dominguez A."/>
            <person name="Revuelta J.L."/>
            <person name="Moreno S."/>
            <person name="Armstrong J."/>
            <person name="Forsburg S.L."/>
            <person name="Cerutti L."/>
            <person name="Lowe T."/>
            <person name="McCombie W.R."/>
            <person name="Paulsen I."/>
            <person name="Potashkin J."/>
            <person name="Shpakovski G.V."/>
            <person name="Ussery D."/>
            <person name="Barrell B.G."/>
            <person name="Nurse P."/>
        </authorList>
    </citation>
    <scope>NUCLEOTIDE SEQUENCE [LARGE SCALE GENOMIC DNA]</scope>
    <source>
        <strain>972 / ATCC 24843</strain>
    </source>
</reference>
<reference key="2">
    <citation type="journal article" date="2006" name="Nat. Biotechnol.">
        <title>ORFeome cloning and global analysis of protein localization in the fission yeast Schizosaccharomyces pombe.</title>
        <authorList>
            <person name="Matsuyama A."/>
            <person name="Arai R."/>
            <person name="Yashiroda Y."/>
            <person name="Shirai A."/>
            <person name="Kamata A."/>
            <person name="Sekido S."/>
            <person name="Kobayashi Y."/>
            <person name="Hashimoto A."/>
            <person name="Hamamoto M."/>
            <person name="Hiraoka Y."/>
            <person name="Horinouchi S."/>
            <person name="Yoshida M."/>
        </authorList>
    </citation>
    <scope>SUBCELLULAR LOCATION [LARGE SCALE ANALYSIS]</scope>
</reference>
<feature type="chain" id="PRO_0000310799" description="Uncharacterized mitochondrial carrier PB17E12.12c">
    <location>
        <begin position="1"/>
        <end position="317"/>
    </location>
</feature>
<feature type="transmembrane region" description="Helical; Name=1" evidence="1">
    <location>
        <begin position="14"/>
        <end position="34"/>
    </location>
</feature>
<feature type="transmembrane region" description="Helical; Name=2" evidence="1">
    <location>
        <begin position="72"/>
        <end position="92"/>
    </location>
</feature>
<feature type="transmembrane region" description="Helical; Name=3" evidence="1">
    <location>
        <begin position="119"/>
        <end position="139"/>
    </location>
</feature>
<feature type="transmembrane region" description="Helical; Name=4" evidence="1">
    <location>
        <begin position="196"/>
        <end position="216"/>
    </location>
</feature>
<feature type="transmembrane region" description="Helical; Name=5" evidence="1">
    <location>
        <begin position="230"/>
        <end position="250"/>
    </location>
</feature>
<feature type="transmembrane region" description="Helical; Name=6" evidence="1">
    <location>
        <begin position="291"/>
        <end position="307"/>
    </location>
</feature>
<feature type="repeat" description="Solcar 1">
    <location>
        <begin position="18"/>
        <end position="103"/>
    </location>
</feature>
<feature type="repeat" description="Solcar 2">
    <location>
        <begin position="113"/>
        <end position="217"/>
    </location>
</feature>
<feature type="repeat" description="Solcar 3">
    <location>
        <begin position="224"/>
        <end position="313"/>
    </location>
</feature>
<organism>
    <name type="scientific">Schizosaccharomyces pombe (strain 972 / ATCC 24843)</name>
    <name type="common">Fission yeast</name>
    <dbReference type="NCBI Taxonomy" id="284812"/>
    <lineage>
        <taxon>Eukaryota</taxon>
        <taxon>Fungi</taxon>
        <taxon>Dikarya</taxon>
        <taxon>Ascomycota</taxon>
        <taxon>Taphrinomycotina</taxon>
        <taxon>Schizosaccharomycetes</taxon>
        <taxon>Schizosaccharomycetales</taxon>
        <taxon>Schizosaccharomycetaceae</taxon>
        <taxon>Schizosaccharomyces</taxon>
    </lineage>
</organism>
<accession>Q8TFH2</accession>